<accession>A1UT11</accession>
<reference key="1">
    <citation type="submission" date="2006-12" db="EMBL/GenBank/DDBJ databases">
        <authorList>
            <person name="Hendrix L."/>
            <person name="Mohamoud Y."/>
            <person name="Radune D."/>
            <person name="Shvartsbeyn A."/>
            <person name="Daugherty S."/>
            <person name="Dodson R."/>
            <person name="Durkin A.S."/>
            <person name="Harkins D."/>
            <person name="Huot H."/>
            <person name="Kothari S.P."/>
            <person name="Madupu R."/>
            <person name="Li J."/>
            <person name="Nelson W.C."/>
            <person name="Shrivastava S."/>
            <person name="Giglio M.G."/>
            <person name="Haft D."/>
            <person name="Selengut J."/>
            <person name="Fraser-Ligget C."/>
            <person name="Seshadri R."/>
        </authorList>
    </citation>
    <scope>NUCLEOTIDE SEQUENCE [LARGE SCALE GENOMIC DNA]</scope>
    <source>
        <strain>ATCC 35685 / KC583 / Herrer 020/F12,63</strain>
    </source>
</reference>
<protein>
    <recommendedName>
        <fullName evidence="1">Small ribosomal subunit protein uS4</fullName>
    </recommendedName>
    <alternativeName>
        <fullName evidence="3">30S ribosomal protein S4</fullName>
    </alternativeName>
</protein>
<dbReference type="EMBL" id="CP000524">
    <property type="protein sequence ID" value="ABM44789.1"/>
    <property type="molecule type" value="Genomic_DNA"/>
</dbReference>
<dbReference type="RefSeq" id="WP_005767167.1">
    <property type="nucleotide sequence ID" value="NC_008783.1"/>
</dbReference>
<dbReference type="SMR" id="A1UT11"/>
<dbReference type="STRING" id="360095.BARBAKC583_0826"/>
<dbReference type="GeneID" id="4684347"/>
<dbReference type="KEGG" id="bbk:BARBAKC583_0826"/>
<dbReference type="PATRIC" id="fig|360095.6.peg.802"/>
<dbReference type="eggNOG" id="COG0522">
    <property type="taxonomic scope" value="Bacteria"/>
</dbReference>
<dbReference type="HOGENOM" id="CLU_092403_0_0_5"/>
<dbReference type="OrthoDB" id="9803672at2"/>
<dbReference type="Proteomes" id="UP000000643">
    <property type="component" value="Chromosome"/>
</dbReference>
<dbReference type="GO" id="GO:0015935">
    <property type="term" value="C:small ribosomal subunit"/>
    <property type="evidence" value="ECO:0007669"/>
    <property type="project" value="InterPro"/>
</dbReference>
<dbReference type="GO" id="GO:0019843">
    <property type="term" value="F:rRNA binding"/>
    <property type="evidence" value="ECO:0007669"/>
    <property type="project" value="UniProtKB-UniRule"/>
</dbReference>
<dbReference type="GO" id="GO:0003735">
    <property type="term" value="F:structural constituent of ribosome"/>
    <property type="evidence" value="ECO:0007669"/>
    <property type="project" value="InterPro"/>
</dbReference>
<dbReference type="GO" id="GO:0042274">
    <property type="term" value="P:ribosomal small subunit biogenesis"/>
    <property type="evidence" value="ECO:0007669"/>
    <property type="project" value="TreeGrafter"/>
</dbReference>
<dbReference type="GO" id="GO:0006412">
    <property type="term" value="P:translation"/>
    <property type="evidence" value="ECO:0007669"/>
    <property type="project" value="UniProtKB-UniRule"/>
</dbReference>
<dbReference type="CDD" id="cd00165">
    <property type="entry name" value="S4"/>
    <property type="match status" value="1"/>
</dbReference>
<dbReference type="FunFam" id="3.10.290.10:FF:000001">
    <property type="entry name" value="30S ribosomal protein S4"/>
    <property type="match status" value="1"/>
</dbReference>
<dbReference type="Gene3D" id="1.10.1050.10">
    <property type="entry name" value="Ribosomal Protein S4 Delta 41, Chain A, domain 1"/>
    <property type="match status" value="1"/>
</dbReference>
<dbReference type="Gene3D" id="3.10.290.10">
    <property type="entry name" value="RNA-binding S4 domain"/>
    <property type="match status" value="1"/>
</dbReference>
<dbReference type="HAMAP" id="MF_01306_B">
    <property type="entry name" value="Ribosomal_uS4_B"/>
    <property type="match status" value="1"/>
</dbReference>
<dbReference type="InterPro" id="IPR022801">
    <property type="entry name" value="Ribosomal_uS4"/>
</dbReference>
<dbReference type="InterPro" id="IPR005709">
    <property type="entry name" value="Ribosomal_uS4_bac-type"/>
</dbReference>
<dbReference type="InterPro" id="IPR018079">
    <property type="entry name" value="Ribosomal_uS4_CS"/>
</dbReference>
<dbReference type="InterPro" id="IPR001912">
    <property type="entry name" value="Ribosomal_uS4_N"/>
</dbReference>
<dbReference type="InterPro" id="IPR002942">
    <property type="entry name" value="S4_RNA-bd"/>
</dbReference>
<dbReference type="InterPro" id="IPR036986">
    <property type="entry name" value="S4_RNA-bd_sf"/>
</dbReference>
<dbReference type="NCBIfam" id="NF003717">
    <property type="entry name" value="PRK05327.1"/>
    <property type="match status" value="1"/>
</dbReference>
<dbReference type="NCBIfam" id="TIGR01017">
    <property type="entry name" value="rpsD_bact"/>
    <property type="match status" value="1"/>
</dbReference>
<dbReference type="PANTHER" id="PTHR11831">
    <property type="entry name" value="30S 40S RIBOSOMAL PROTEIN"/>
    <property type="match status" value="1"/>
</dbReference>
<dbReference type="PANTHER" id="PTHR11831:SF4">
    <property type="entry name" value="SMALL RIBOSOMAL SUBUNIT PROTEIN US4M"/>
    <property type="match status" value="1"/>
</dbReference>
<dbReference type="Pfam" id="PF00163">
    <property type="entry name" value="Ribosomal_S4"/>
    <property type="match status" value="1"/>
</dbReference>
<dbReference type="Pfam" id="PF01479">
    <property type="entry name" value="S4"/>
    <property type="match status" value="1"/>
</dbReference>
<dbReference type="SMART" id="SM01390">
    <property type="entry name" value="Ribosomal_S4"/>
    <property type="match status" value="1"/>
</dbReference>
<dbReference type="SMART" id="SM00363">
    <property type="entry name" value="S4"/>
    <property type="match status" value="1"/>
</dbReference>
<dbReference type="SUPFAM" id="SSF55174">
    <property type="entry name" value="Alpha-L RNA-binding motif"/>
    <property type="match status" value="1"/>
</dbReference>
<dbReference type="PROSITE" id="PS00632">
    <property type="entry name" value="RIBOSOMAL_S4"/>
    <property type="match status" value="1"/>
</dbReference>
<dbReference type="PROSITE" id="PS50889">
    <property type="entry name" value="S4"/>
    <property type="match status" value="1"/>
</dbReference>
<gene>
    <name evidence="1" type="primary">rpsD</name>
    <name type="ordered locus">BARBAKC583_0826</name>
</gene>
<keyword id="KW-0687">Ribonucleoprotein</keyword>
<keyword id="KW-0689">Ribosomal protein</keyword>
<keyword id="KW-0694">RNA-binding</keyword>
<keyword id="KW-0699">rRNA-binding</keyword>
<sequence length="205" mass="23820">MSKRESAKYKIDRRIGENIWGRPKSPVNRREYGPGQHGQRRKGKLSDYGVQLCAKQKLKGFYGDISEKQFRKIYQEAVRRRGDTGENLIGLLESRLDAIVYRSKFVPTIFASRQFINHGHVNVNGRRTNIQSYRCKPGDVIEIRERSKQLLLVLEATQLNERDVPDYIEADHSKMKATFVRIPAFSDVPYAVQMEPNLVVEFYSR</sequence>
<feature type="chain" id="PRO_0000293243" description="Small ribosomal subunit protein uS4">
    <location>
        <begin position="1"/>
        <end position="205"/>
    </location>
</feature>
<feature type="domain" description="S4 RNA-binding" evidence="1">
    <location>
        <begin position="94"/>
        <end position="154"/>
    </location>
</feature>
<feature type="region of interest" description="Disordered" evidence="2">
    <location>
        <begin position="20"/>
        <end position="44"/>
    </location>
</feature>
<name>RS4_BARBK</name>
<comment type="function">
    <text evidence="1">One of the primary rRNA binding proteins, it binds directly to 16S rRNA where it nucleates assembly of the body of the 30S subunit.</text>
</comment>
<comment type="function">
    <text evidence="1">With S5 and S12 plays an important role in translational accuracy.</text>
</comment>
<comment type="subunit">
    <text evidence="1">Part of the 30S ribosomal subunit. Contacts protein S5. The interaction surface between S4 and S5 is involved in control of translational fidelity.</text>
</comment>
<comment type="similarity">
    <text evidence="1">Belongs to the universal ribosomal protein uS4 family.</text>
</comment>
<evidence type="ECO:0000255" key="1">
    <source>
        <dbReference type="HAMAP-Rule" id="MF_01306"/>
    </source>
</evidence>
<evidence type="ECO:0000256" key="2">
    <source>
        <dbReference type="SAM" id="MobiDB-lite"/>
    </source>
</evidence>
<evidence type="ECO:0000305" key="3"/>
<proteinExistence type="inferred from homology"/>
<organism>
    <name type="scientific">Bartonella bacilliformis (strain ATCC 35685 / KC583 / Herrer 020/F12,63)</name>
    <dbReference type="NCBI Taxonomy" id="360095"/>
    <lineage>
        <taxon>Bacteria</taxon>
        <taxon>Pseudomonadati</taxon>
        <taxon>Pseudomonadota</taxon>
        <taxon>Alphaproteobacteria</taxon>
        <taxon>Hyphomicrobiales</taxon>
        <taxon>Bartonellaceae</taxon>
        <taxon>Bartonella</taxon>
    </lineage>
</organism>